<accession>A2IAB1</accession>
<sequence length="73" mass="8031">MKLQFLFIFIAFCVMLFAQIATAKPVEAEVAQSNLDECEVEAEVAQPKLYQRGEGGNGMEPIPEDVLNEALNA</sequence>
<name>XC42_XENCH</name>
<reference evidence="5" key="1">
    <citation type="journal article" date="2007" name="BMC Genomics">
        <title>An insight into the sialome of the oriental rat flea, Xenopsylla cheopis (Rots).</title>
        <authorList>
            <person name="Andersen J.F."/>
            <person name="Hinnebusch B.J."/>
            <person name="Lucas D.A."/>
            <person name="Conrads T.P."/>
            <person name="Veenstra T.D."/>
            <person name="Pham V.M."/>
            <person name="Ribeiro J.M."/>
        </authorList>
    </citation>
    <scope>NUCLEOTIDE SEQUENCE [LARGE SCALE MRNA]</scope>
    <source>
        <tissue evidence="5">Salivary gland</tissue>
    </source>
</reference>
<reference evidence="4" key="2">
    <citation type="journal article" date="2021" name="J. Biol. Chem.">
        <title>Identification of a substrate-like cleavage-resistant thrombin inhibitor from the saliva of the flea Xenopsylla cheopis.</title>
        <authorList>
            <person name="Lu S."/>
            <person name="Tirloni L."/>
            <person name="Oliveira M.B."/>
            <person name="Bosio C.F."/>
            <person name="Nardone G.A."/>
            <person name="Zhang Y."/>
            <person name="Hinnebusch B.J."/>
            <person name="Ribeiro J.M."/>
            <person name="Andersen J.F."/>
        </authorList>
    </citation>
    <scope>IDENTIFICATION BY MASS SPECTROMETRY</scope>
    <scope>FUNCTION</scope>
    <scope>INTERACTION WITH HOST THROMBIN</scope>
    <scope>TISSUE SPECIFICITY</scope>
</reference>
<protein>
    <recommendedName>
        <fullName evidence="4">Salivary thrombin inhibitor XC-42</fullName>
        <shortName evidence="3">XC-42</shortName>
    </recommendedName>
</protein>
<organism>
    <name type="scientific">Xenopsylla cheopis</name>
    <name type="common">Oriental rat flea</name>
    <name type="synonym">Pulex cheopis</name>
    <dbReference type="NCBI Taxonomy" id="163159"/>
    <lineage>
        <taxon>Eukaryota</taxon>
        <taxon>Metazoa</taxon>
        <taxon>Ecdysozoa</taxon>
        <taxon>Arthropoda</taxon>
        <taxon>Hexapoda</taxon>
        <taxon>Insecta</taxon>
        <taxon>Pterygota</taxon>
        <taxon>Neoptera</taxon>
        <taxon>Endopterygota</taxon>
        <taxon>Siphonaptera</taxon>
        <taxon>Pulicidae</taxon>
        <taxon>Xenopsyllinae</taxon>
        <taxon>Xenopsylla</taxon>
    </lineage>
</organism>
<dbReference type="EMBL" id="EF179425">
    <property type="protein sequence ID" value="ABM55431.1"/>
    <property type="molecule type" value="mRNA"/>
</dbReference>
<dbReference type="GO" id="GO:0005576">
    <property type="term" value="C:extracellular region"/>
    <property type="evidence" value="ECO:0007669"/>
    <property type="project" value="UniProtKB-SubCell"/>
</dbReference>
<evidence type="ECO:0000255" key="1"/>
<evidence type="ECO:0000269" key="2">
    <source>
    </source>
</evidence>
<evidence type="ECO:0000303" key="3">
    <source>
    </source>
</evidence>
<evidence type="ECO:0000305" key="4"/>
<evidence type="ECO:0000312" key="5">
    <source>
        <dbReference type="EMBL" id="ABM55431.1"/>
    </source>
</evidence>
<feature type="signal peptide" evidence="1">
    <location>
        <begin position="1"/>
        <end position="23"/>
    </location>
</feature>
<feature type="chain" id="PRO_5002644325" description="Salivary thrombin inhibitor XC-42" evidence="1">
    <location>
        <begin position="24"/>
        <end position="73"/>
    </location>
</feature>
<comment type="function">
    <text evidence="2">Acts as a competitive inhibitor of host thrombin.</text>
</comment>
<comment type="subunit">
    <text evidence="2">Interacts with human F2 (thrombin).</text>
</comment>
<comment type="subcellular location">
    <subcellularLocation>
        <location evidence="4">Secreted</location>
    </subcellularLocation>
</comment>
<comment type="tissue specificity">
    <text evidence="2">Salivary gland (at protein level).</text>
</comment>
<proteinExistence type="evidence at protein level"/>
<keyword id="KW-0964">Secreted</keyword>
<keyword id="KW-0732">Signal</keyword>